<organism>
    <name type="scientific">Streptococcus mutans serotype c (strain ATCC 700610 / UA159)</name>
    <dbReference type="NCBI Taxonomy" id="210007"/>
    <lineage>
        <taxon>Bacteria</taxon>
        <taxon>Bacillati</taxon>
        <taxon>Bacillota</taxon>
        <taxon>Bacilli</taxon>
        <taxon>Lactobacillales</taxon>
        <taxon>Streptococcaceae</taxon>
        <taxon>Streptococcus</taxon>
    </lineage>
</organism>
<name>GUAA_STRMU</name>
<feature type="chain" id="PRO_0000140187" description="GMP synthase [glutamine-hydrolyzing]">
    <location>
        <begin position="1"/>
        <end position="517"/>
    </location>
</feature>
<feature type="domain" description="Glutamine amidotransferase type-1" evidence="1">
    <location>
        <begin position="9"/>
        <end position="202"/>
    </location>
</feature>
<feature type="domain" description="GMPS ATP-PPase" evidence="1">
    <location>
        <begin position="203"/>
        <end position="392"/>
    </location>
</feature>
<feature type="active site" description="Nucleophile" evidence="1">
    <location>
        <position position="86"/>
    </location>
</feature>
<feature type="active site" evidence="1">
    <location>
        <position position="176"/>
    </location>
</feature>
<feature type="active site" evidence="1">
    <location>
        <position position="178"/>
    </location>
</feature>
<feature type="binding site" evidence="1">
    <location>
        <begin position="230"/>
        <end position="236"/>
    </location>
    <ligand>
        <name>ATP</name>
        <dbReference type="ChEBI" id="CHEBI:30616"/>
    </ligand>
</feature>
<sequence>MTDIKDIQKIIVLDYGSQYNQLIARRIREFGIFSELRSHKVTADEVRAINPIGIVLSGGPSSVYAEDAFDIDKEILDLGIPVLGICYGMQLLTEKLGGKVVPAGQTGNSEYGQSTLHLTENSELFKETPAEQTVLMSHGDAVTEIPEGFQLVGKSSDCPYAAIENVEKKIFGIQFHPEVRHTEYGNAILRNFAFNVCKAKGDWSMDSFIDMEIEKIREQVGNRKVLLGLSGGVDSSVVGVLLQKAIGDQLTCIFVDHGLLRKGEGDQVMEMLGGRFGLNIIRVDASKRFLDLLAGIDDPEKKRKIIGNEFVYVFDDEASKQKGVDFLAQGTLYTDVIESGTETAQTIKSHHNVGGLPEDMQFELIEPLNTLFKDEVRTLGTALGMPDEIVWRQPFPGPGLAIRVMGEITAEKLETVRESDAILREEIAAAGLNRDIWQYFTVNTGVRSVGVMGDGRTYDYTIAIRAITSIDGMTADFARIPWEVLQKISVRIVNEVEHVNRIVYDITSKPPATVEWE</sequence>
<keyword id="KW-0067">ATP-binding</keyword>
<keyword id="KW-0315">Glutamine amidotransferase</keyword>
<keyword id="KW-0332">GMP biosynthesis</keyword>
<keyword id="KW-0436">Ligase</keyword>
<keyword id="KW-0547">Nucleotide-binding</keyword>
<keyword id="KW-0658">Purine biosynthesis</keyword>
<keyword id="KW-1185">Reference proteome</keyword>
<reference key="1">
    <citation type="journal article" date="2002" name="Proc. Natl. Acad. Sci. U.S.A.">
        <title>Genome sequence of Streptococcus mutans UA159, a cariogenic dental pathogen.</title>
        <authorList>
            <person name="Ajdic D.J."/>
            <person name="McShan W.M."/>
            <person name="McLaughlin R.E."/>
            <person name="Savic G."/>
            <person name="Chang J."/>
            <person name="Carson M.B."/>
            <person name="Primeaux C."/>
            <person name="Tian R."/>
            <person name="Kenton S."/>
            <person name="Jia H.G."/>
            <person name="Lin S.P."/>
            <person name="Qian Y."/>
            <person name="Li S."/>
            <person name="Zhu H."/>
            <person name="Najar F.Z."/>
            <person name="Lai H."/>
            <person name="White J."/>
            <person name="Roe B.A."/>
            <person name="Ferretti J.J."/>
        </authorList>
    </citation>
    <scope>NUCLEOTIDE SEQUENCE [LARGE SCALE GENOMIC DNA]</scope>
    <source>
        <strain>ATCC 700610 / UA159</strain>
    </source>
</reference>
<gene>
    <name evidence="1" type="primary">guaA</name>
    <name type="ordered locus">SMU_1066</name>
</gene>
<dbReference type="EC" id="6.3.5.2" evidence="1"/>
<dbReference type="EMBL" id="AE014133">
    <property type="protein sequence ID" value="AAN58764.1"/>
    <property type="molecule type" value="Genomic_DNA"/>
</dbReference>
<dbReference type="RefSeq" id="NP_721458.1">
    <property type="nucleotide sequence ID" value="NC_004350.2"/>
</dbReference>
<dbReference type="RefSeq" id="WP_002262274.1">
    <property type="nucleotide sequence ID" value="NC_004350.2"/>
</dbReference>
<dbReference type="SMR" id="Q8DU81"/>
<dbReference type="STRING" id="210007.SMU_1066"/>
<dbReference type="KEGG" id="smu:SMU_1066"/>
<dbReference type="PATRIC" id="fig|210007.7.peg.953"/>
<dbReference type="eggNOG" id="COG0519">
    <property type="taxonomic scope" value="Bacteria"/>
</dbReference>
<dbReference type="HOGENOM" id="CLU_014340_0_5_9"/>
<dbReference type="OrthoDB" id="9802219at2"/>
<dbReference type="PhylomeDB" id="Q8DU81"/>
<dbReference type="UniPathway" id="UPA00189">
    <property type="reaction ID" value="UER00296"/>
</dbReference>
<dbReference type="Proteomes" id="UP000002512">
    <property type="component" value="Chromosome"/>
</dbReference>
<dbReference type="GO" id="GO:0005829">
    <property type="term" value="C:cytosol"/>
    <property type="evidence" value="ECO:0007669"/>
    <property type="project" value="TreeGrafter"/>
</dbReference>
<dbReference type="GO" id="GO:0005524">
    <property type="term" value="F:ATP binding"/>
    <property type="evidence" value="ECO:0007669"/>
    <property type="project" value="UniProtKB-UniRule"/>
</dbReference>
<dbReference type="GO" id="GO:0003921">
    <property type="term" value="F:GMP synthase activity"/>
    <property type="evidence" value="ECO:0007669"/>
    <property type="project" value="InterPro"/>
</dbReference>
<dbReference type="CDD" id="cd01742">
    <property type="entry name" value="GATase1_GMP_Synthase"/>
    <property type="match status" value="1"/>
</dbReference>
<dbReference type="CDD" id="cd01997">
    <property type="entry name" value="GMP_synthase_C"/>
    <property type="match status" value="1"/>
</dbReference>
<dbReference type="FunFam" id="3.30.300.10:FF:000002">
    <property type="entry name" value="GMP synthase [glutamine-hydrolyzing]"/>
    <property type="match status" value="1"/>
</dbReference>
<dbReference type="FunFam" id="3.40.50.620:FF:000001">
    <property type="entry name" value="GMP synthase [glutamine-hydrolyzing]"/>
    <property type="match status" value="1"/>
</dbReference>
<dbReference type="FunFam" id="3.40.50.880:FF:000001">
    <property type="entry name" value="GMP synthase [glutamine-hydrolyzing]"/>
    <property type="match status" value="1"/>
</dbReference>
<dbReference type="Gene3D" id="3.30.300.10">
    <property type="match status" value="1"/>
</dbReference>
<dbReference type="Gene3D" id="3.40.50.880">
    <property type="match status" value="1"/>
</dbReference>
<dbReference type="Gene3D" id="3.40.50.620">
    <property type="entry name" value="HUPs"/>
    <property type="match status" value="1"/>
</dbReference>
<dbReference type="HAMAP" id="MF_00344">
    <property type="entry name" value="GMP_synthase"/>
    <property type="match status" value="1"/>
</dbReference>
<dbReference type="InterPro" id="IPR029062">
    <property type="entry name" value="Class_I_gatase-like"/>
</dbReference>
<dbReference type="InterPro" id="IPR017926">
    <property type="entry name" value="GATASE"/>
</dbReference>
<dbReference type="InterPro" id="IPR001674">
    <property type="entry name" value="GMP_synth_C"/>
</dbReference>
<dbReference type="InterPro" id="IPR004739">
    <property type="entry name" value="GMP_synth_GATase"/>
</dbReference>
<dbReference type="InterPro" id="IPR022955">
    <property type="entry name" value="GMP_synthase"/>
</dbReference>
<dbReference type="InterPro" id="IPR025777">
    <property type="entry name" value="GMPS_ATP_PPase_dom"/>
</dbReference>
<dbReference type="InterPro" id="IPR022310">
    <property type="entry name" value="NAD/GMP_synthase"/>
</dbReference>
<dbReference type="InterPro" id="IPR014729">
    <property type="entry name" value="Rossmann-like_a/b/a_fold"/>
</dbReference>
<dbReference type="NCBIfam" id="TIGR00884">
    <property type="entry name" value="guaA_Cterm"/>
    <property type="match status" value="1"/>
</dbReference>
<dbReference type="NCBIfam" id="TIGR00888">
    <property type="entry name" value="guaA_Nterm"/>
    <property type="match status" value="1"/>
</dbReference>
<dbReference type="NCBIfam" id="NF000848">
    <property type="entry name" value="PRK00074.1"/>
    <property type="match status" value="1"/>
</dbReference>
<dbReference type="PANTHER" id="PTHR11922:SF2">
    <property type="entry name" value="GMP SYNTHASE [GLUTAMINE-HYDROLYZING]"/>
    <property type="match status" value="1"/>
</dbReference>
<dbReference type="PANTHER" id="PTHR11922">
    <property type="entry name" value="GMP SYNTHASE-RELATED"/>
    <property type="match status" value="1"/>
</dbReference>
<dbReference type="Pfam" id="PF00117">
    <property type="entry name" value="GATase"/>
    <property type="match status" value="1"/>
</dbReference>
<dbReference type="Pfam" id="PF00958">
    <property type="entry name" value="GMP_synt_C"/>
    <property type="match status" value="1"/>
</dbReference>
<dbReference type="Pfam" id="PF02540">
    <property type="entry name" value="NAD_synthase"/>
    <property type="match status" value="1"/>
</dbReference>
<dbReference type="PRINTS" id="PR00097">
    <property type="entry name" value="ANTSNTHASEII"/>
</dbReference>
<dbReference type="PRINTS" id="PR00099">
    <property type="entry name" value="CPSGATASE"/>
</dbReference>
<dbReference type="PRINTS" id="PR00096">
    <property type="entry name" value="GATASE"/>
</dbReference>
<dbReference type="SUPFAM" id="SSF52402">
    <property type="entry name" value="Adenine nucleotide alpha hydrolases-like"/>
    <property type="match status" value="1"/>
</dbReference>
<dbReference type="SUPFAM" id="SSF52317">
    <property type="entry name" value="Class I glutamine amidotransferase-like"/>
    <property type="match status" value="1"/>
</dbReference>
<dbReference type="SUPFAM" id="SSF54810">
    <property type="entry name" value="GMP synthetase C-terminal dimerisation domain"/>
    <property type="match status" value="1"/>
</dbReference>
<dbReference type="PROSITE" id="PS51273">
    <property type="entry name" value="GATASE_TYPE_1"/>
    <property type="match status" value="1"/>
</dbReference>
<dbReference type="PROSITE" id="PS51553">
    <property type="entry name" value="GMPS_ATP_PPASE"/>
    <property type="match status" value="1"/>
</dbReference>
<accession>Q8DU81</accession>
<comment type="function">
    <text evidence="1">Catalyzes the synthesis of GMP from XMP.</text>
</comment>
<comment type="catalytic activity">
    <reaction evidence="1">
        <text>XMP + L-glutamine + ATP + H2O = GMP + L-glutamate + AMP + diphosphate + 2 H(+)</text>
        <dbReference type="Rhea" id="RHEA:11680"/>
        <dbReference type="ChEBI" id="CHEBI:15377"/>
        <dbReference type="ChEBI" id="CHEBI:15378"/>
        <dbReference type="ChEBI" id="CHEBI:29985"/>
        <dbReference type="ChEBI" id="CHEBI:30616"/>
        <dbReference type="ChEBI" id="CHEBI:33019"/>
        <dbReference type="ChEBI" id="CHEBI:57464"/>
        <dbReference type="ChEBI" id="CHEBI:58115"/>
        <dbReference type="ChEBI" id="CHEBI:58359"/>
        <dbReference type="ChEBI" id="CHEBI:456215"/>
        <dbReference type="EC" id="6.3.5.2"/>
    </reaction>
</comment>
<comment type="pathway">
    <text evidence="1">Purine metabolism; GMP biosynthesis; GMP from XMP (L-Gln route): step 1/1.</text>
</comment>
<comment type="subunit">
    <text evidence="1">Homodimer.</text>
</comment>
<proteinExistence type="inferred from homology"/>
<evidence type="ECO:0000255" key="1">
    <source>
        <dbReference type="HAMAP-Rule" id="MF_00344"/>
    </source>
</evidence>
<protein>
    <recommendedName>
        <fullName evidence="1">GMP synthase [glutamine-hydrolyzing]</fullName>
        <ecNumber evidence="1">6.3.5.2</ecNumber>
    </recommendedName>
    <alternativeName>
        <fullName evidence="1">GMP synthetase</fullName>
    </alternativeName>
    <alternativeName>
        <fullName evidence="1">Glutamine amidotransferase</fullName>
    </alternativeName>
</protein>